<proteinExistence type="evidence at protein level"/>
<dbReference type="EMBL" id="M31309">
    <property type="protein sequence ID" value="AAA29400.1"/>
    <property type="molecule type" value="Genomic_DNA"/>
</dbReference>
<dbReference type="EMBL" id="M31310">
    <property type="protein sequence ID" value="AAA29401.1"/>
    <property type="molecule type" value="Genomic_DNA"/>
</dbReference>
<dbReference type="PIR" id="A34843">
    <property type="entry name" value="A34843"/>
</dbReference>
<dbReference type="PDB" id="1JB7">
    <property type="method" value="X-ray"/>
    <property type="resolution" value="1.86 A"/>
    <property type="chains" value="B=1-260"/>
</dbReference>
<dbReference type="PDB" id="1OTC">
    <property type="method" value="X-ray"/>
    <property type="resolution" value="2.80 A"/>
    <property type="chains" value="B=1-260"/>
</dbReference>
<dbReference type="PDB" id="1PA6">
    <property type="method" value="X-ray"/>
    <property type="resolution" value="2.45 A"/>
    <property type="chains" value="B=9-224"/>
</dbReference>
<dbReference type="PDB" id="1PH1">
    <property type="method" value="X-ray"/>
    <property type="resolution" value="2.51 A"/>
    <property type="chains" value="B=8-224"/>
</dbReference>
<dbReference type="PDB" id="1PH2">
    <property type="method" value="X-ray"/>
    <property type="resolution" value="3.10 A"/>
    <property type="chains" value="B=9-224"/>
</dbReference>
<dbReference type="PDB" id="1PH3">
    <property type="method" value="X-ray"/>
    <property type="resolution" value="2.30 A"/>
    <property type="chains" value="B=9-224"/>
</dbReference>
<dbReference type="PDB" id="1PH4">
    <property type="method" value="X-ray"/>
    <property type="resolution" value="2.30 A"/>
    <property type="chains" value="B=9-224"/>
</dbReference>
<dbReference type="PDB" id="1PH5">
    <property type="method" value="X-ray"/>
    <property type="resolution" value="2.30 A"/>
    <property type="chains" value="B=9-224"/>
</dbReference>
<dbReference type="PDB" id="1PH6">
    <property type="method" value="X-ray"/>
    <property type="resolution" value="2.10 A"/>
    <property type="chains" value="B=8-224"/>
</dbReference>
<dbReference type="PDB" id="1PH7">
    <property type="method" value="X-ray"/>
    <property type="resolution" value="2.90 A"/>
    <property type="chains" value="B=9-224"/>
</dbReference>
<dbReference type="PDB" id="1PH8">
    <property type="method" value="X-ray"/>
    <property type="resolution" value="2.36 A"/>
    <property type="chains" value="B=9-224"/>
</dbReference>
<dbReference type="PDB" id="1PH9">
    <property type="method" value="X-ray"/>
    <property type="resolution" value="2.50 A"/>
    <property type="chains" value="B=9-224"/>
</dbReference>
<dbReference type="PDB" id="1PHJ">
    <property type="method" value="X-ray"/>
    <property type="resolution" value="2.50 A"/>
    <property type="chains" value="B=9-224"/>
</dbReference>
<dbReference type="PDB" id="2I0Q">
    <property type="method" value="X-ray"/>
    <property type="resolution" value="1.91 A"/>
    <property type="chains" value="B=1-385"/>
</dbReference>
<dbReference type="PDBsum" id="1JB7"/>
<dbReference type="PDBsum" id="1OTC"/>
<dbReference type="PDBsum" id="1PA6"/>
<dbReference type="PDBsum" id="1PH1"/>
<dbReference type="PDBsum" id="1PH2"/>
<dbReference type="PDBsum" id="1PH3"/>
<dbReference type="PDBsum" id="1PH4"/>
<dbReference type="PDBsum" id="1PH5"/>
<dbReference type="PDBsum" id="1PH6"/>
<dbReference type="PDBsum" id="1PH7"/>
<dbReference type="PDBsum" id="1PH8"/>
<dbReference type="PDBsum" id="1PH9"/>
<dbReference type="PDBsum" id="1PHJ"/>
<dbReference type="PDBsum" id="2I0Q"/>
<dbReference type="SMR" id="P16458"/>
<dbReference type="DIP" id="DIP-6195N"/>
<dbReference type="MINT" id="P16458"/>
<dbReference type="EvolutionaryTrace" id="P16458"/>
<dbReference type="GO" id="GO:0005634">
    <property type="term" value="C:nucleus"/>
    <property type="evidence" value="ECO:0007669"/>
    <property type="project" value="UniProtKB-SubCell"/>
</dbReference>
<dbReference type="GO" id="GO:0032991">
    <property type="term" value="C:protein-containing complex"/>
    <property type="evidence" value="ECO:0000315"/>
    <property type="project" value="CAFA"/>
</dbReference>
<dbReference type="GO" id="GO:0000782">
    <property type="term" value="C:telomere cap complex"/>
    <property type="evidence" value="ECO:0000315"/>
    <property type="project" value="CAFA"/>
</dbReference>
<dbReference type="GO" id="GO:0043047">
    <property type="term" value="F:single-stranded telomeric DNA binding"/>
    <property type="evidence" value="ECO:0000315"/>
    <property type="project" value="CAFA"/>
</dbReference>
<dbReference type="GO" id="GO:0016233">
    <property type="term" value="P:telomere capping"/>
    <property type="evidence" value="ECO:0000315"/>
    <property type="project" value="CAFA"/>
</dbReference>
<dbReference type="DisProt" id="DP00659"/>
<dbReference type="Gene3D" id="2.40.200.10">
    <property type="entry name" value="Telomere-binding Protein Beta Subunit, Chain"/>
    <property type="match status" value="1"/>
</dbReference>
<dbReference type="InterPro" id="IPR012340">
    <property type="entry name" value="NA-bd_OB-fold"/>
</dbReference>
<dbReference type="InterPro" id="IPR010874">
    <property type="entry name" value="TEBB"/>
</dbReference>
<dbReference type="InterPro" id="IPR023113">
    <property type="entry name" value="TEBP_beta_dom_sf"/>
</dbReference>
<dbReference type="Pfam" id="PF07404">
    <property type="entry name" value="TEBP_beta"/>
    <property type="match status" value="1"/>
</dbReference>
<dbReference type="PIRSF" id="PIRSF018412">
    <property type="entry name" value="TEBP_beta"/>
    <property type="match status" value="1"/>
</dbReference>
<dbReference type="SUPFAM" id="SSF50249">
    <property type="entry name" value="Nucleic acid-binding proteins"/>
    <property type="match status" value="1"/>
</dbReference>
<name>TEBB_STENO</name>
<gene>
    <name type="primary">MAC-41A</name>
</gene>
<gene>
    <name type="primary">MAC-41S</name>
</gene>
<sequence length="385" mass="41446">MSKGASAPQQQSAFKQLYTELFNNEGDFSKVSSNLKKPLKCYVKESYPHFLVTDGYFFVAPYFTKEAVNEFHAKFPNVNIVDLTDKVIVINNWSLELRRVNSAEVFTSYANLEARLIVHSFKPNLQERLNPTRYPVNLFRDDEFKTTIQHFRHTALQAAINKTVKGDNLVDISKVADAAGKKGKVDAGIVKASASKGDEFSDFSFKEGNTATLKIADIFVQEKGKDALNKAADHTDGAKVKGGAKGKGKAAAKAAKGKKLSAKKGDSSAADVRKSVDKIVKYTPSKGSRKDTPQKSQAPAAGKSSAKKGGKKAVPSAPSPSGKKSALTTDKMTMAQFVKYLDWHEKKKGGKVSSGGKVLGKRSAGKASATSGKASKASKKTAAKK</sequence>
<protein>
    <recommendedName>
        <fullName>Telomere-binding protein subunit beta</fullName>
    </recommendedName>
    <alternativeName>
        <fullName>TEBP beta</fullName>
    </alternativeName>
    <alternativeName>
        <fullName>Telomere-binding protein 41 kDa subunit</fullName>
    </alternativeName>
</protein>
<feature type="chain" id="PRO_0000121737" description="Telomere-binding protein subunit beta">
    <location>
        <begin position="1"/>
        <end position="385"/>
    </location>
</feature>
<feature type="region of interest" description="Disordered" evidence="1">
    <location>
        <begin position="231"/>
        <end position="329"/>
    </location>
</feature>
<feature type="region of interest" description="Disordered" evidence="1">
    <location>
        <begin position="343"/>
        <end position="385"/>
    </location>
</feature>
<feature type="compositionally biased region" description="Basic residues" evidence="1">
    <location>
        <begin position="242"/>
        <end position="262"/>
    </location>
</feature>
<feature type="compositionally biased region" description="Basic and acidic residues" evidence="1">
    <location>
        <begin position="263"/>
        <end position="280"/>
    </location>
</feature>
<feature type="compositionally biased region" description="Low complexity" evidence="1">
    <location>
        <begin position="295"/>
        <end position="304"/>
    </location>
</feature>
<feature type="compositionally biased region" description="Low complexity" evidence="1">
    <location>
        <begin position="312"/>
        <end position="326"/>
    </location>
</feature>
<feature type="compositionally biased region" description="Low complexity" evidence="1">
    <location>
        <begin position="365"/>
        <end position="375"/>
    </location>
</feature>
<feature type="compositionally biased region" description="Basic residues" evidence="1">
    <location>
        <begin position="376"/>
        <end position="385"/>
    </location>
</feature>
<feature type="sequence variant" description="In MAC-41S.">
    <original>A</original>
    <variation>S</variation>
    <location>
        <position position="110"/>
    </location>
</feature>
<feature type="helix" evidence="2">
    <location>
        <begin position="13"/>
        <end position="23"/>
    </location>
</feature>
<feature type="turn" evidence="2">
    <location>
        <begin position="24"/>
        <end position="26"/>
    </location>
</feature>
<feature type="helix" evidence="2">
    <location>
        <begin position="28"/>
        <end position="30"/>
    </location>
</feature>
<feature type="helix" evidence="2">
    <location>
        <begin position="33"/>
        <end position="35"/>
    </location>
</feature>
<feature type="strand" evidence="2">
    <location>
        <begin position="39"/>
        <end position="45"/>
    </location>
</feature>
<feature type="strand" evidence="2">
    <location>
        <begin position="47"/>
        <end position="49"/>
    </location>
</feature>
<feature type="strand" evidence="2">
    <location>
        <begin position="51"/>
        <end position="59"/>
    </location>
</feature>
<feature type="strand" evidence="2">
    <location>
        <begin position="61"/>
        <end position="63"/>
    </location>
</feature>
<feature type="helix" evidence="2">
    <location>
        <begin position="65"/>
        <end position="74"/>
    </location>
</feature>
<feature type="helix" evidence="2">
    <location>
        <begin position="80"/>
        <end position="82"/>
    </location>
</feature>
<feature type="strand" evidence="2">
    <location>
        <begin position="87"/>
        <end position="99"/>
    </location>
</feature>
<feature type="turn" evidence="2">
    <location>
        <begin position="102"/>
        <end position="104"/>
    </location>
</feature>
<feature type="strand" evidence="2">
    <location>
        <begin position="112"/>
        <end position="124"/>
    </location>
</feature>
<feature type="helix" evidence="2">
    <location>
        <begin position="138"/>
        <end position="140"/>
    </location>
</feature>
<feature type="helix" evidence="2">
    <location>
        <begin position="142"/>
        <end position="163"/>
    </location>
</feature>
<feature type="helix" evidence="2">
    <location>
        <begin position="172"/>
        <end position="175"/>
    </location>
</feature>
<feature type="helix" evidence="3">
    <location>
        <begin position="178"/>
        <end position="180"/>
    </location>
</feature>
<feature type="helix" evidence="2">
    <location>
        <begin position="185"/>
        <end position="188"/>
    </location>
</feature>
<feature type="strand" evidence="2">
    <location>
        <begin position="189"/>
        <end position="191"/>
    </location>
</feature>
<feature type="strand" evidence="2">
    <location>
        <begin position="196"/>
        <end position="199"/>
    </location>
</feature>
<feature type="helix" evidence="2">
    <location>
        <begin position="215"/>
        <end position="223"/>
    </location>
</feature>
<reference key="1">
    <citation type="journal article" date="1990" name="Proc. Natl. Acad. Sci. U.S.A.">
        <title>Two versions of the gene encoding the 41-kilodalton subunit of the telomere binding protein of Oxytricha nova.</title>
        <authorList>
            <person name="Hicke B.J."/>
            <person name="Celander D.W."/>
            <person name="Macdonald G.H."/>
            <person name="Price C.M."/>
            <person name="Cech T.R."/>
        </authorList>
    </citation>
    <scope>NUCLEOTIDE SEQUENCE [GENOMIC DNA]</scope>
    <scope>PROTEIN SEQUENCE OF 100-140</scope>
</reference>
<reference key="2">
    <citation type="journal article" date="1998" name="Cell">
        <title>Crystal structure of the Oxytricha nova telomere end binding protein complexed with single strand DNA.</title>
        <authorList>
            <person name="Horvath M.P."/>
            <person name="Schweiker V.L."/>
            <person name="Bevilacqua J.M."/>
            <person name="Ruggles J.A."/>
            <person name="Schultz S.C."/>
        </authorList>
    </citation>
    <scope>X-RAY CRYSTALLOGRAPHY (2.8 ANGSTROMS)</scope>
</reference>
<evidence type="ECO:0000256" key="1">
    <source>
        <dbReference type="SAM" id="MobiDB-lite"/>
    </source>
</evidence>
<evidence type="ECO:0007829" key="2">
    <source>
        <dbReference type="PDB" id="1JB7"/>
    </source>
</evidence>
<evidence type="ECO:0007829" key="3">
    <source>
        <dbReference type="PDB" id="2I0Q"/>
    </source>
</evidence>
<organism>
    <name type="scientific">Sterkiella nova</name>
    <name type="common">Ciliate</name>
    <name type="synonym">Oxytricha nova</name>
    <dbReference type="NCBI Taxonomy" id="200597"/>
    <lineage>
        <taxon>Eukaryota</taxon>
        <taxon>Sar</taxon>
        <taxon>Alveolata</taxon>
        <taxon>Ciliophora</taxon>
        <taxon>Intramacronucleata</taxon>
        <taxon>Spirotrichea</taxon>
        <taxon>Stichotrichia</taxon>
        <taxon>Sporadotrichida</taxon>
        <taxon>Oxytrichidae</taxon>
        <taxon>Stylonychinae</taxon>
        <taxon>Sterkiella</taxon>
    </lineage>
</organism>
<comment type="function">
    <text>May function as protective capping of the single-stranded telomeric overhang. May also participate in telomere length regulation during DNA replication. Binds specifically to the T4G4-containing extension on the 3'strand and protects this region of the telomere from nuclease digestion and chemical modification.</text>
</comment>
<comment type="subunit">
    <text>Heterodimer of an alpha and a beta subunit.</text>
</comment>
<comment type="subcellular location">
    <subcellularLocation>
        <location>Nucleus</location>
    </subcellularLocation>
    <subcellularLocation>
        <location>Chromosome</location>
        <location>Telomere</location>
    </subcellularLocation>
</comment>
<comment type="miscellaneous">
    <text>The sequence of MAC-41A is shown. MAC-41S differs in only one position.</text>
</comment>
<keyword id="KW-0002">3D-structure</keyword>
<keyword id="KW-0158">Chromosome</keyword>
<keyword id="KW-0903">Direct protein sequencing</keyword>
<keyword id="KW-0238">DNA-binding</keyword>
<keyword id="KW-0539">Nucleus</keyword>
<keyword id="KW-0779">Telomere</keyword>
<accession>P16458</accession>